<evidence type="ECO:0000255" key="1">
    <source>
        <dbReference type="HAMAP-Rule" id="MF_00303"/>
    </source>
</evidence>
<reference key="1">
    <citation type="journal article" date="2005" name="Nat. Biotechnol.">
        <title>Complete genome sequence of the plant commensal Pseudomonas fluorescens Pf-5.</title>
        <authorList>
            <person name="Paulsen I.T."/>
            <person name="Press C.M."/>
            <person name="Ravel J."/>
            <person name="Kobayashi D.Y."/>
            <person name="Myers G.S.A."/>
            <person name="Mavrodi D.V."/>
            <person name="DeBoy R.T."/>
            <person name="Seshadri R."/>
            <person name="Ren Q."/>
            <person name="Madupu R."/>
            <person name="Dodson R.J."/>
            <person name="Durkin A.S."/>
            <person name="Brinkac L.M."/>
            <person name="Daugherty S.C."/>
            <person name="Sullivan S.A."/>
            <person name="Rosovitz M.J."/>
            <person name="Gwinn M.L."/>
            <person name="Zhou L."/>
            <person name="Schneider D.J."/>
            <person name="Cartinhour S.W."/>
            <person name="Nelson W.C."/>
            <person name="Weidman J."/>
            <person name="Watkins K."/>
            <person name="Tran K."/>
            <person name="Khouri H."/>
            <person name="Pierson E.A."/>
            <person name="Pierson L.S. III"/>
            <person name="Thomashow L.S."/>
            <person name="Loper J.E."/>
        </authorList>
    </citation>
    <scope>NUCLEOTIDE SEQUENCE [LARGE SCALE GENOMIC DNA]</scope>
    <source>
        <strain>ATCC BAA-477 / NRRL B-23932 / Pf-5</strain>
    </source>
</reference>
<organism>
    <name type="scientific">Pseudomonas fluorescens (strain ATCC BAA-477 / NRRL B-23932 / Pf-5)</name>
    <dbReference type="NCBI Taxonomy" id="220664"/>
    <lineage>
        <taxon>Bacteria</taxon>
        <taxon>Pseudomonadati</taxon>
        <taxon>Pseudomonadota</taxon>
        <taxon>Gammaproteobacteria</taxon>
        <taxon>Pseudomonadales</taxon>
        <taxon>Pseudomonadaceae</taxon>
        <taxon>Pseudomonas</taxon>
    </lineage>
</organism>
<protein>
    <recommendedName>
        <fullName evidence="1">Trigger factor</fullName>
        <shortName evidence="1">TF</shortName>
        <ecNumber evidence="1">5.2.1.8</ecNumber>
    </recommendedName>
    <alternativeName>
        <fullName evidence="1">PPIase</fullName>
    </alternativeName>
</protein>
<sequence>MQVSVENTSALERRMSITVPAERIESQVNKRLQQTAQKAKIPGFRPGKVPMSVIRQRYEADARQEAVGDVIQASFYEAVVEQKLNPAGAPSVEPKVLEKGKDLEYVATFEVFPEFTVAGFENIAVERLSADVADADLDNMLEILRKQNVRFEVADRAAQNDDQLNIDFVGKVDGEVFAGGSAKGTQLVLGSGRMIPGFEEGLVGAKAGEERVLNLTFPENYQNLDLANKAAEFTVTVNSVSEPKLPELTEEFFAQFGIKEAGLEGFRAEVRKNMERELRQAIKSKVKNQVMDGLLASNPIEVPKALLDNEVNRLRVQAVQQFGGNIKPDQLPAELFEEQAKRRVVLGLIVAEVVKQFDLKPDEDRVRELIQEMASAYQEPEQVVSWYYKNEQQLNEVRSVVLEEQVVDTVLQKASVTDKSVSYEEAVKPVEAPQAD</sequence>
<gene>
    <name evidence="1" type="primary">tig</name>
    <name type="ordered locus">PFL_3988</name>
</gene>
<feature type="chain" id="PRO_0000256592" description="Trigger factor">
    <location>
        <begin position="1"/>
        <end position="436"/>
    </location>
</feature>
<feature type="domain" description="PPIase FKBP-type" evidence="1">
    <location>
        <begin position="161"/>
        <end position="246"/>
    </location>
</feature>
<keyword id="KW-0131">Cell cycle</keyword>
<keyword id="KW-0132">Cell division</keyword>
<keyword id="KW-0143">Chaperone</keyword>
<keyword id="KW-0963">Cytoplasm</keyword>
<keyword id="KW-0413">Isomerase</keyword>
<keyword id="KW-0697">Rotamase</keyword>
<name>TIG_PSEF5</name>
<proteinExistence type="inferred from homology"/>
<dbReference type="EC" id="5.2.1.8" evidence="1"/>
<dbReference type="EMBL" id="CP000076">
    <property type="protein sequence ID" value="AAY93252.1"/>
    <property type="molecule type" value="Genomic_DNA"/>
</dbReference>
<dbReference type="RefSeq" id="WP_011062275.1">
    <property type="nucleotide sequence ID" value="NC_004129.6"/>
</dbReference>
<dbReference type="SMR" id="Q4K9J5"/>
<dbReference type="STRING" id="220664.PFL_3988"/>
<dbReference type="KEGG" id="pfl:PFL_3988"/>
<dbReference type="PATRIC" id="fig|220664.5.peg.4086"/>
<dbReference type="eggNOG" id="COG0544">
    <property type="taxonomic scope" value="Bacteria"/>
</dbReference>
<dbReference type="HOGENOM" id="CLU_033058_2_0_6"/>
<dbReference type="Proteomes" id="UP000008540">
    <property type="component" value="Chromosome"/>
</dbReference>
<dbReference type="GO" id="GO:0005737">
    <property type="term" value="C:cytoplasm"/>
    <property type="evidence" value="ECO:0007669"/>
    <property type="project" value="UniProtKB-SubCell"/>
</dbReference>
<dbReference type="GO" id="GO:0003755">
    <property type="term" value="F:peptidyl-prolyl cis-trans isomerase activity"/>
    <property type="evidence" value="ECO:0007669"/>
    <property type="project" value="UniProtKB-UniRule"/>
</dbReference>
<dbReference type="GO" id="GO:0044183">
    <property type="term" value="F:protein folding chaperone"/>
    <property type="evidence" value="ECO:0007669"/>
    <property type="project" value="TreeGrafter"/>
</dbReference>
<dbReference type="GO" id="GO:0043022">
    <property type="term" value="F:ribosome binding"/>
    <property type="evidence" value="ECO:0007669"/>
    <property type="project" value="TreeGrafter"/>
</dbReference>
<dbReference type="GO" id="GO:0051083">
    <property type="term" value="P:'de novo' cotranslational protein folding"/>
    <property type="evidence" value="ECO:0007669"/>
    <property type="project" value="TreeGrafter"/>
</dbReference>
<dbReference type="GO" id="GO:0051301">
    <property type="term" value="P:cell division"/>
    <property type="evidence" value="ECO:0007669"/>
    <property type="project" value="UniProtKB-KW"/>
</dbReference>
<dbReference type="GO" id="GO:0061077">
    <property type="term" value="P:chaperone-mediated protein folding"/>
    <property type="evidence" value="ECO:0007669"/>
    <property type="project" value="TreeGrafter"/>
</dbReference>
<dbReference type="GO" id="GO:0015031">
    <property type="term" value="P:protein transport"/>
    <property type="evidence" value="ECO:0007669"/>
    <property type="project" value="UniProtKB-UniRule"/>
</dbReference>
<dbReference type="GO" id="GO:0043335">
    <property type="term" value="P:protein unfolding"/>
    <property type="evidence" value="ECO:0007669"/>
    <property type="project" value="TreeGrafter"/>
</dbReference>
<dbReference type="FunFam" id="3.10.50.40:FF:000001">
    <property type="entry name" value="Trigger factor"/>
    <property type="match status" value="1"/>
</dbReference>
<dbReference type="Gene3D" id="3.10.50.40">
    <property type="match status" value="1"/>
</dbReference>
<dbReference type="Gene3D" id="3.30.70.1050">
    <property type="entry name" value="Trigger factor ribosome-binding domain"/>
    <property type="match status" value="1"/>
</dbReference>
<dbReference type="Gene3D" id="1.10.3120.10">
    <property type="entry name" value="Trigger factor, C-terminal domain"/>
    <property type="match status" value="1"/>
</dbReference>
<dbReference type="HAMAP" id="MF_00303">
    <property type="entry name" value="Trigger_factor_Tig"/>
    <property type="match status" value="1"/>
</dbReference>
<dbReference type="InterPro" id="IPR046357">
    <property type="entry name" value="PPIase_dom_sf"/>
</dbReference>
<dbReference type="InterPro" id="IPR001179">
    <property type="entry name" value="PPIase_FKBP_dom"/>
</dbReference>
<dbReference type="InterPro" id="IPR005215">
    <property type="entry name" value="Trig_fac"/>
</dbReference>
<dbReference type="InterPro" id="IPR008880">
    <property type="entry name" value="Trigger_fac_C"/>
</dbReference>
<dbReference type="InterPro" id="IPR037041">
    <property type="entry name" value="Trigger_fac_C_sf"/>
</dbReference>
<dbReference type="InterPro" id="IPR008881">
    <property type="entry name" value="Trigger_fac_ribosome-bd_bac"/>
</dbReference>
<dbReference type="InterPro" id="IPR036611">
    <property type="entry name" value="Trigger_fac_ribosome-bd_sf"/>
</dbReference>
<dbReference type="InterPro" id="IPR027304">
    <property type="entry name" value="Trigger_fact/SurA_dom_sf"/>
</dbReference>
<dbReference type="NCBIfam" id="TIGR00115">
    <property type="entry name" value="tig"/>
    <property type="match status" value="1"/>
</dbReference>
<dbReference type="PANTHER" id="PTHR30560">
    <property type="entry name" value="TRIGGER FACTOR CHAPERONE AND PEPTIDYL-PROLYL CIS/TRANS ISOMERASE"/>
    <property type="match status" value="1"/>
</dbReference>
<dbReference type="PANTHER" id="PTHR30560:SF3">
    <property type="entry name" value="TRIGGER FACTOR-LIKE PROTEIN TIG, CHLOROPLASTIC"/>
    <property type="match status" value="1"/>
</dbReference>
<dbReference type="Pfam" id="PF00254">
    <property type="entry name" value="FKBP_C"/>
    <property type="match status" value="1"/>
</dbReference>
<dbReference type="Pfam" id="PF05698">
    <property type="entry name" value="Trigger_C"/>
    <property type="match status" value="1"/>
</dbReference>
<dbReference type="Pfam" id="PF05697">
    <property type="entry name" value="Trigger_N"/>
    <property type="match status" value="1"/>
</dbReference>
<dbReference type="PIRSF" id="PIRSF003095">
    <property type="entry name" value="Trigger_factor"/>
    <property type="match status" value="1"/>
</dbReference>
<dbReference type="SUPFAM" id="SSF54534">
    <property type="entry name" value="FKBP-like"/>
    <property type="match status" value="1"/>
</dbReference>
<dbReference type="SUPFAM" id="SSF109998">
    <property type="entry name" value="Triger factor/SurA peptide-binding domain-like"/>
    <property type="match status" value="1"/>
</dbReference>
<dbReference type="SUPFAM" id="SSF102735">
    <property type="entry name" value="Trigger factor ribosome-binding domain"/>
    <property type="match status" value="1"/>
</dbReference>
<dbReference type="PROSITE" id="PS50059">
    <property type="entry name" value="FKBP_PPIASE"/>
    <property type="match status" value="1"/>
</dbReference>
<accession>Q4K9J5</accession>
<comment type="function">
    <text evidence="1">Involved in protein export. Acts as a chaperone by maintaining the newly synthesized protein in an open conformation. Functions as a peptidyl-prolyl cis-trans isomerase.</text>
</comment>
<comment type="catalytic activity">
    <reaction evidence="1">
        <text>[protein]-peptidylproline (omega=180) = [protein]-peptidylproline (omega=0)</text>
        <dbReference type="Rhea" id="RHEA:16237"/>
        <dbReference type="Rhea" id="RHEA-COMP:10747"/>
        <dbReference type="Rhea" id="RHEA-COMP:10748"/>
        <dbReference type="ChEBI" id="CHEBI:83833"/>
        <dbReference type="ChEBI" id="CHEBI:83834"/>
        <dbReference type="EC" id="5.2.1.8"/>
    </reaction>
</comment>
<comment type="subcellular location">
    <subcellularLocation>
        <location>Cytoplasm</location>
    </subcellularLocation>
    <text evidence="1">About half TF is bound to the ribosome near the polypeptide exit tunnel while the other half is free in the cytoplasm.</text>
</comment>
<comment type="domain">
    <text evidence="1">Consists of 3 domains; the N-terminus binds the ribosome, the middle domain has PPIase activity, while the C-terminus has intrinsic chaperone activity on its own.</text>
</comment>
<comment type="similarity">
    <text evidence="1">Belongs to the FKBP-type PPIase family. Tig subfamily.</text>
</comment>